<reference key="1">
    <citation type="journal article" date="2004" name="Science">
        <title>The Ashbya gossypii genome as a tool for mapping the ancient Saccharomyces cerevisiae genome.</title>
        <authorList>
            <person name="Dietrich F.S."/>
            <person name="Voegeli S."/>
            <person name="Brachat S."/>
            <person name="Lerch A."/>
            <person name="Gates K."/>
            <person name="Steiner S."/>
            <person name="Mohr C."/>
            <person name="Poehlmann R."/>
            <person name="Luedi P."/>
            <person name="Choi S."/>
            <person name="Wing R.A."/>
            <person name="Flavier A."/>
            <person name="Gaffney T.D."/>
            <person name="Philippsen P."/>
        </authorList>
    </citation>
    <scope>NUCLEOTIDE SEQUENCE [LARGE SCALE GENOMIC DNA]</scope>
    <source>
        <strain>ATCC 10895 / CBS 109.51 / FGSC 9923 / NRRL Y-1056</strain>
    </source>
</reference>
<reference key="2">
    <citation type="journal article" date="2013" name="G3 (Bethesda)">
        <title>Genomes of Ashbya fungi isolated from insects reveal four mating-type loci, numerous translocations, lack of transposons, and distinct gene duplications.</title>
        <authorList>
            <person name="Dietrich F.S."/>
            <person name="Voegeli S."/>
            <person name="Kuo S."/>
            <person name="Philippsen P."/>
        </authorList>
    </citation>
    <scope>GENOME REANNOTATION</scope>
    <source>
        <strain>ATCC 10895 / CBS 109.51 / FGSC 9923 / NRRL Y-1056</strain>
    </source>
</reference>
<accession>Q751Q9</accession>
<dbReference type="EC" id="6.3.5.-" evidence="1"/>
<dbReference type="EMBL" id="AE016820">
    <property type="protein sequence ID" value="AAS54188.1"/>
    <property type="molecule type" value="Genomic_DNA"/>
</dbReference>
<dbReference type="RefSeq" id="NP_986364.1">
    <property type="nucleotide sequence ID" value="NM_211426.1"/>
</dbReference>
<dbReference type="SMR" id="Q751Q9"/>
<dbReference type="FunCoup" id="Q751Q9">
    <property type="interactions" value="385"/>
</dbReference>
<dbReference type="STRING" id="284811.Q751Q9"/>
<dbReference type="EnsemblFungi" id="AAS54188">
    <property type="protein sequence ID" value="AAS54188"/>
    <property type="gene ID" value="AGOS_AGL303W"/>
</dbReference>
<dbReference type="GeneID" id="4622657"/>
<dbReference type="KEGG" id="ago:AGOS_AGL303W"/>
<dbReference type="eggNOG" id="KOG2438">
    <property type="taxonomic scope" value="Eukaryota"/>
</dbReference>
<dbReference type="HOGENOM" id="CLU_019240_4_0_1"/>
<dbReference type="InParanoid" id="Q751Q9"/>
<dbReference type="OMA" id="FELMFKE"/>
<dbReference type="OrthoDB" id="1722066at2759"/>
<dbReference type="Proteomes" id="UP000000591">
    <property type="component" value="Chromosome VII"/>
</dbReference>
<dbReference type="GO" id="GO:0030956">
    <property type="term" value="C:glutamyl-tRNA(Gln) amidotransferase complex"/>
    <property type="evidence" value="ECO:0000318"/>
    <property type="project" value="GO_Central"/>
</dbReference>
<dbReference type="GO" id="GO:0005739">
    <property type="term" value="C:mitochondrion"/>
    <property type="evidence" value="ECO:0000318"/>
    <property type="project" value="GO_Central"/>
</dbReference>
<dbReference type="GO" id="GO:0005524">
    <property type="term" value="F:ATP binding"/>
    <property type="evidence" value="ECO:0007669"/>
    <property type="project" value="UniProtKB-KW"/>
</dbReference>
<dbReference type="GO" id="GO:0050567">
    <property type="term" value="F:glutaminyl-tRNA synthase (glutamine-hydrolyzing) activity"/>
    <property type="evidence" value="ECO:0000318"/>
    <property type="project" value="GO_Central"/>
</dbReference>
<dbReference type="GO" id="GO:0070681">
    <property type="term" value="P:glutaminyl-tRNAGln biosynthesis via transamidation"/>
    <property type="evidence" value="ECO:0000318"/>
    <property type="project" value="GO_Central"/>
</dbReference>
<dbReference type="GO" id="GO:0032543">
    <property type="term" value="P:mitochondrial translation"/>
    <property type="evidence" value="ECO:0000318"/>
    <property type="project" value="GO_Central"/>
</dbReference>
<dbReference type="Gene3D" id="1.10.10.410">
    <property type="match status" value="1"/>
</dbReference>
<dbReference type="HAMAP" id="MF_00121">
    <property type="entry name" value="GatB"/>
    <property type="match status" value="1"/>
</dbReference>
<dbReference type="InterPro" id="IPR017959">
    <property type="entry name" value="Asn/Gln-tRNA_amidoTrfase_suB/E"/>
</dbReference>
<dbReference type="InterPro" id="IPR006075">
    <property type="entry name" value="Asn/Gln-tRNA_Trfase_suB/E_cat"/>
</dbReference>
<dbReference type="InterPro" id="IPR018027">
    <property type="entry name" value="Asn/Gln_amidotransferase"/>
</dbReference>
<dbReference type="InterPro" id="IPR003789">
    <property type="entry name" value="Asn/Gln_tRNA_amidoTrase-B-like"/>
</dbReference>
<dbReference type="InterPro" id="IPR004413">
    <property type="entry name" value="GatB"/>
</dbReference>
<dbReference type="InterPro" id="IPR023168">
    <property type="entry name" value="GatB_Yqey_C_2"/>
</dbReference>
<dbReference type="InterPro" id="IPR017958">
    <property type="entry name" value="Gln-tRNA_amidoTrfase_suB_CS"/>
</dbReference>
<dbReference type="InterPro" id="IPR014746">
    <property type="entry name" value="Gln_synth/guanido_kin_cat_dom"/>
</dbReference>
<dbReference type="NCBIfam" id="TIGR00133">
    <property type="entry name" value="gatB"/>
    <property type="match status" value="1"/>
</dbReference>
<dbReference type="NCBIfam" id="NF004012">
    <property type="entry name" value="PRK05477.1-2"/>
    <property type="match status" value="1"/>
</dbReference>
<dbReference type="PANTHER" id="PTHR11659">
    <property type="entry name" value="GLUTAMYL-TRNA GLN AMIDOTRANSFERASE SUBUNIT B MITOCHONDRIAL AND PROKARYOTIC PET112-RELATED"/>
    <property type="match status" value="1"/>
</dbReference>
<dbReference type="PANTHER" id="PTHR11659:SF0">
    <property type="entry name" value="GLUTAMYL-TRNA(GLN) AMIDOTRANSFERASE SUBUNIT B, MITOCHONDRIAL"/>
    <property type="match status" value="1"/>
</dbReference>
<dbReference type="Pfam" id="PF02934">
    <property type="entry name" value="GatB_N"/>
    <property type="match status" value="1"/>
</dbReference>
<dbReference type="Pfam" id="PF02637">
    <property type="entry name" value="GatB_Yqey"/>
    <property type="match status" value="1"/>
</dbReference>
<dbReference type="SMART" id="SM00845">
    <property type="entry name" value="GatB_Yqey"/>
    <property type="match status" value="1"/>
</dbReference>
<dbReference type="SUPFAM" id="SSF89095">
    <property type="entry name" value="GatB/YqeY motif"/>
    <property type="match status" value="1"/>
</dbReference>
<dbReference type="SUPFAM" id="SSF55931">
    <property type="entry name" value="Glutamine synthetase/guanido kinase"/>
    <property type="match status" value="1"/>
</dbReference>
<dbReference type="PROSITE" id="PS01234">
    <property type="entry name" value="GATB"/>
    <property type="match status" value="1"/>
</dbReference>
<feature type="transit peptide" description="Mitochondrion" evidence="1">
    <location>
        <begin position="1"/>
        <end position="8"/>
    </location>
</feature>
<feature type="chain" id="PRO_0000413242" description="Glutamyl-tRNA(Gln) amidotransferase subunit B, mitochondrial">
    <location>
        <begin position="9"/>
        <end position="536"/>
    </location>
</feature>
<keyword id="KW-0067">ATP-binding</keyword>
<keyword id="KW-0436">Ligase</keyword>
<keyword id="KW-0496">Mitochondrion</keyword>
<keyword id="KW-0547">Nucleotide-binding</keyword>
<keyword id="KW-0648">Protein biosynthesis</keyword>
<keyword id="KW-1185">Reference proteome</keyword>
<keyword id="KW-0809">Transit peptide</keyword>
<evidence type="ECO:0000255" key="1">
    <source>
        <dbReference type="HAMAP-Rule" id="MF_03147"/>
    </source>
</evidence>
<comment type="function">
    <text evidence="1">Allows the formation of correctly charged Gln-tRNA(Gln) through the transamidation of misacylated Glu-tRNA(Gln) in the mitochondria. The reaction takes place in the presence of glutamine and ATP through an activated gamma-phospho-Glu-tRNA(Gln).</text>
</comment>
<comment type="catalytic activity">
    <reaction evidence="1">
        <text>L-glutamyl-tRNA(Gln) + L-glutamine + ATP + H2O = L-glutaminyl-tRNA(Gln) + L-glutamate + ADP + phosphate + H(+)</text>
        <dbReference type="Rhea" id="RHEA:17521"/>
        <dbReference type="Rhea" id="RHEA-COMP:9681"/>
        <dbReference type="Rhea" id="RHEA-COMP:9684"/>
        <dbReference type="ChEBI" id="CHEBI:15377"/>
        <dbReference type="ChEBI" id="CHEBI:15378"/>
        <dbReference type="ChEBI" id="CHEBI:29985"/>
        <dbReference type="ChEBI" id="CHEBI:30616"/>
        <dbReference type="ChEBI" id="CHEBI:43474"/>
        <dbReference type="ChEBI" id="CHEBI:58359"/>
        <dbReference type="ChEBI" id="CHEBI:78520"/>
        <dbReference type="ChEBI" id="CHEBI:78521"/>
        <dbReference type="ChEBI" id="CHEBI:456216"/>
    </reaction>
</comment>
<comment type="subunit">
    <text evidence="1">Subunit of the heterotrimeric GatFAB amidotransferase (AdT) complex, composed of A, B and F subunits.</text>
</comment>
<comment type="subcellular location">
    <subcellularLocation>
        <location evidence="1">Mitochondrion</location>
    </subcellularLocation>
</comment>
<comment type="similarity">
    <text evidence="1">Belongs to the GatB/GatE family. GatB subfamily.</text>
</comment>
<sequence>MLRVHRLYSTRGAAEVLHAAPKYALRCGLEIHTQLNTRNKLFSLSTNDPFQAAATPNYHTSFFDISLPGTQPRLNYEAVLYAIKLSLALDCRVNLKSQFDRKHYFYGDQPLGYQITQHYNPIAKDGKLCLYGAYDNIPEDEKTIGIIQLQLEQDTGRSLYKDTDGMTLIDLNRSNVPLVEMVTQPDFTDVKQVRAFVKKYQNLVRHLNISTGDLETGAMRVDVNMSVNGHARVELKNLPNTSSITNAIRYEYQRQVDIIRSGQADKMLKDVETRGWTGSATIKLRSKESTIDYRYMPDPEIPVLLLEPEVVHRVATALPELPDQTLRKLMAEPYNLSLKDAKILTTNSNSHGNFYTHHDLRNYFMKTFQLFTAKTGASNSKLPANWIIHELLGIINKLEIPLPKILQLLPASHFAEFLALIHDNELSKSSAKLLLFHIINDFKESHCSNLALPDFRLLIEQYNLNPLNEVEEHALTELCQYVLRELNDDALVADLVSGKKKNALKFLLGKGMRLSQGKVDPALLEGAFKSVLGIKW</sequence>
<name>GATB_EREGS</name>
<protein>
    <recommendedName>
        <fullName evidence="1">Glutamyl-tRNA(Gln) amidotransferase subunit B, mitochondrial</fullName>
        <shortName evidence="1">Glu-AdT subunit B</shortName>
        <ecNumber evidence="1">6.3.5.-</ecNumber>
    </recommendedName>
</protein>
<proteinExistence type="inferred from homology"/>
<organism>
    <name type="scientific">Eremothecium gossypii (strain ATCC 10895 / CBS 109.51 / FGSC 9923 / NRRL Y-1056)</name>
    <name type="common">Yeast</name>
    <name type="synonym">Ashbya gossypii</name>
    <dbReference type="NCBI Taxonomy" id="284811"/>
    <lineage>
        <taxon>Eukaryota</taxon>
        <taxon>Fungi</taxon>
        <taxon>Dikarya</taxon>
        <taxon>Ascomycota</taxon>
        <taxon>Saccharomycotina</taxon>
        <taxon>Saccharomycetes</taxon>
        <taxon>Saccharomycetales</taxon>
        <taxon>Saccharomycetaceae</taxon>
        <taxon>Eremothecium</taxon>
    </lineage>
</organism>
<gene>
    <name evidence="1" type="primary">PET112</name>
    <name type="ordered locus">AGL303W</name>
</gene>